<feature type="chain" id="PRO_0000451130" description="Palmitoyltransferase ZDHHC23-A">
    <location>
        <begin position="1"/>
        <end position="403"/>
    </location>
</feature>
<feature type="topological domain" description="Cytoplasmic" evidence="5">
    <location>
        <begin position="1"/>
        <end position="70"/>
    </location>
</feature>
<feature type="transmembrane region" description="Helical" evidence="3">
    <location>
        <begin position="71"/>
        <end position="91"/>
    </location>
</feature>
<feature type="topological domain" description="Lumenal" evidence="5">
    <location>
        <position position="92"/>
    </location>
</feature>
<feature type="transmembrane region" description="Helical" evidence="3">
    <location>
        <begin position="93"/>
        <end position="113"/>
    </location>
</feature>
<feature type="topological domain" description="Cytoplasmic" evidence="5">
    <location>
        <begin position="114"/>
        <end position="125"/>
    </location>
</feature>
<feature type="transmembrane region" description="Helical" evidence="3">
    <location>
        <begin position="126"/>
        <end position="146"/>
    </location>
</feature>
<feature type="topological domain" description="Lumenal" evidence="5">
    <location>
        <begin position="147"/>
        <end position="153"/>
    </location>
</feature>
<feature type="transmembrane region" description="Helical" evidence="3">
    <location>
        <begin position="154"/>
        <end position="174"/>
    </location>
</feature>
<feature type="topological domain" description="Cytoplasmic" evidence="5">
    <location>
        <begin position="175"/>
        <end position="268"/>
    </location>
</feature>
<feature type="transmembrane region" description="Helical" evidence="3">
    <location>
        <begin position="269"/>
        <end position="289"/>
    </location>
</feature>
<feature type="topological domain" description="Lumenal" evidence="5">
    <location>
        <begin position="290"/>
        <end position="319"/>
    </location>
</feature>
<feature type="transmembrane region" description="Helical" evidence="3">
    <location>
        <begin position="320"/>
        <end position="340"/>
    </location>
</feature>
<feature type="topological domain" description="Cytoplasmic" evidence="5">
    <location>
        <begin position="341"/>
        <end position="403"/>
    </location>
</feature>
<feature type="domain" description="DHHC" evidence="4">
    <location>
        <begin position="225"/>
        <end position="275"/>
    </location>
</feature>
<feature type="active site" description="S-palmitoyl cysteine intermediate" evidence="4">
    <location>
        <position position="255"/>
    </location>
</feature>
<sequence>MKRERFKPPEPDDPLCCCGDIDQQREYCCCDCEELDDACERLLRGEPDKPDVFSRFISRMADRLGVSCCTVGPLRLELSVLPPMVLIPGLLRVAAINCLLGVIILTALPLLVLWYYYMTHRRKRRTLFFLSLALFSLAYMYYLFLTEIVPRGDVTHLQVVTATTGMMLTLISLVRTKQGPGFVKSQSLALGINSSLATNRSTNLTLDTDLRNGVSHLKGEKDVKKKCPVCQLVRPPRAGHCRICGACVLRMDHHCVWINSCVGQANHRQFILTLLLFLLTSFYGISLVLRSICPKQSLFTAMLYCPGVYNQYSTALCFTCVWYSVIITGGLLHLFILQIINVSCNVTEREAQIALRNKTGRRRFCGLVVETGDHSRGFLQNWIQFLTMNMDEIGSSLNLTDMV</sequence>
<comment type="function">
    <text evidence="2">Palmitoyltransferase that could catalyze the addition of palmitate onto various protein substrates and be involved in a variety of cellular processes.</text>
</comment>
<comment type="catalytic activity">
    <reaction evidence="2">
        <text>L-cysteinyl-[protein] + hexadecanoyl-CoA = S-hexadecanoyl-L-cysteinyl-[protein] + CoA</text>
        <dbReference type="Rhea" id="RHEA:36683"/>
        <dbReference type="Rhea" id="RHEA-COMP:10131"/>
        <dbReference type="Rhea" id="RHEA-COMP:11032"/>
        <dbReference type="ChEBI" id="CHEBI:29950"/>
        <dbReference type="ChEBI" id="CHEBI:57287"/>
        <dbReference type="ChEBI" id="CHEBI:57379"/>
        <dbReference type="ChEBI" id="CHEBI:74151"/>
        <dbReference type="EC" id="2.3.1.225"/>
    </reaction>
    <physiologicalReaction direction="left-to-right" evidence="2">
        <dbReference type="Rhea" id="RHEA:36684"/>
    </physiologicalReaction>
</comment>
<comment type="subcellular location">
    <subcellularLocation>
        <location evidence="2">Golgi apparatus membrane</location>
        <topology evidence="3">Multi-pass membrane protein</topology>
    </subcellularLocation>
    <subcellularLocation>
        <location evidence="2">Golgi apparatus</location>
        <location evidence="2">trans-Golgi network membrane</location>
        <topology evidence="3">Multi-pass membrane protein</topology>
    </subcellularLocation>
</comment>
<comment type="domain">
    <text evidence="1">The DHHC domain is required for palmitoyltransferase activity.</text>
</comment>
<comment type="similarity">
    <text evidence="5">Belongs to the DHHC palmitoyltransferase family.</text>
</comment>
<dbReference type="EC" id="2.3.1.225" evidence="2"/>
<dbReference type="EMBL" id="BX119902">
    <property type="status" value="NOT_ANNOTATED_CDS"/>
    <property type="molecule type" value="Genomic_DNA"/>
</dbReference>
<dbReference type="RefSeq" id="XP_017211740.1">
    <property type="nucleotide sequence ID" value="XM_017356251.1"/>
</dbReference>
<dbReference type="FunCoup" id="F1QHM7">
    <property type="interactions" value="11"/>
</dbReference>
<dbReference type="PaxDb" id="7955-ENSDARP00000041904"/>
<dbReference type="Ensembl" id="ENSDART00000041905">
    <property type="protein sequence ID" value="ENSDARP00000041904"/>
    <property type="gene ID" value="ENSDARG00000029039"/>
</dbReference>
<dbReference type="eggNOG" id="KOG1311">
    <property type="taxonomic scope" value="Eukaryota"/>
</dbReference>
<dbReference type="InParanoid" id="F1QHM7"/>
<dbReference type="OMA" id="SLYGISM"/>
<dbReference type="TreeFam" id="TF354316"/>
<dbReference type="Proteomes" id="UP000000437">
    <property type="component" value="Unplaced"/>
</dbReference>
<dbReference type="Bgee" id="ENSDARG00000029039">
    <property type="expression patterns" value="Expressed in heart and 10 other cell types or tissues"/>
</dbReference>
<dbReference type="ExpressionAtlas" id="F1QHM7">
    <property type="expression patterns" value="baseline and differential"/>
</dbReference>
<dbReference type="GO" id="GO:0000139">
    <property type="term" value="C:Golgi membrane"/>
    <property type="evidence" value="ECO:0007669"/>
    <property type="project" value="UniProtKB-SubCell"/>
</dbReference>
<dbReference type="GO" id="GO:0019706">
    <property type="term" value="F:protein-cysteine S-palmitoyltransferase activity"/>
    <property type="evidence" value="ECO:0007669"/>
    <property type="project" value="UniProtKB-EC"/>
</dbReference>
<dbReference type="InterPro" id="IPR001594">
    <property type="entry name" value="Palmitoyltrfase_DHHC"/>
</dbReference>
<dbReference type="InterPro" id="IPR039859">
    <property type="entry name" value="PFA4/ZDH16/20/ERF2-like"/>
</dbReference>
<dbReference type="PANTHER" id="PTHR22883:SF475">
    <property type="entry name" value="PALMITOYLTRANSFERASE ZDHHC23"/>
    <property type="match status" value="1"/>
</dbReference>
<dbReference type="PANTHER" id="PTHR22883">
    <property type="entry name" value="ZINC FINGER DHHC DOMAIN CONTAINING PROTEIN"/>
    <property type="match status" value="1"/>
</dbReference>
<dbReference type="Pfam" id="PF01529">
    <property type="entry name" value="DHHC"/>
    <property type="match status" value="1"/>
</dbReference>
<dbReference type="PROSITE" id="PS50216">
    <property type="entry name" value="DHHC"/>
    <property type="match status" value="1"/>
</dbReference>
<accession>F1QHM7</accession>
<evidence type="ECO:0000250" key="1">
    <source>
        <dbReference type="UniProtKB" id="Q8IUH5"/>
    </source>
</evidence>
<evidence type="ECO:0000250" key="2">
    <source>
        <dbReference type="UniProtKB" id="Q8IYP9"/>
    </source>
</evidence>
<evidence type="ECO:0000255" key="3"/>
<evidence type="ECO:0000255" key="4">
    <source>
        <dbReference type="PROSITE-ProRule" id="PRU00067"/>
    </source>
</evidence>
<evidence type="ECO:0000305" key="5"/>
<reference key="1">
    <citation type="journal article" date="2013" name="Nature">
        <title>The zebrafish reference genome sequence and its relationship to the human genome.</title>
        <authorList>
            <person name="Howe K."/>
            <person name="Clark M.D."/>
            <person name="Torroja C.F."/>
            <person name="Torrance J."/>
            <person name="Berthelot C."/>
            <person name="Muffato M."/>
            <person name="Collins J.E."/>
            <person name="Humphray S."/>
            <person name="McLaren K."/>
            <person name="Matthews L."/>
            <person name="McLaren S."/>
            <person name="Sealy I."/>
            <person name="Caccamo M."/>
            <person name="Churcher C."/>
            <person name="Scott C."/>
            <person name="Barrett J.C."/>
            <person name="Koch R."/>
            <person name="Rauch G.J."/>
            <person name="White S."/>
            <person name="Chow W."/>
            <person name="Kilian B."/>
            <person name="Quintais L.T."/>
            <person name="Guerra-Assuncao J.A."/>
            <person name="Zhou Y."/>
            <person name="Gu Y."/>
            <person name="Yen J."/>
            <person name="Vogel J.H."/>
            <person name="Eyre T."/>
            <person name="Redmond S."/>
            <person name="Banerjee R."/>
            <person name="Chi J."/>
            <person name="Fu B."/>
            <person name="Langley E."/>
            <person name="Maguire S.F."/>
            <person name="Laird G.K."/>
            <person name="Lloyd D."/>
            <person name="Kenyon E."/>
            <person name="Donaldson S."/>
            <person name="Sehra H."/>
            <person name="Almeida-King J."/>
            <person name="Loveland J."/>
            <person name="Trevanion S."/>
            <person name="Jones M."/>
            <person name="Quail M."/>
            <person name="Willey D."/>
            <person name="Hunt A."/>
            <person name="Burton J."/>
            <person name="Sims S."/>
            <person name="McLay K."/>
            <person name="Plumb B."/>
            <person name="Davis J."/>
            <person name="Clee C."/>
            <person name="Oliver K."/>
            <person name="Clark R."/>
            <person name="Riddle C."/>
            <person name="Elliot D."/>
            <person name="Threadgold G."/>
            <person name="Harden G."/>
            <person name="Ware D."/>
            <person name="Begum S."/>
            <person name="Mortimore B."/>
            <person name="Kerry G."/>
            <person name="Heath P."/>
            <person name="Phillimore B."/>
            <person name="Tracey A."/>
            <person name="Corby N."/>
            <person name="Dunn M."/>
            <person name="Johnson C."/>
            <person name="Wood J."/>
            <person name="Clark S."/>
            <person name="Pelan S."/>
            <person name="Griffiths G."/>
            <person name="Smith M."/>
            <person name="Glithero R."/>
            <person name="Howden P."/>
            <person name="Barker N."/>
            <person name="Lloyd C."/>
            <person name="Stevens C."/>
            <person name="Harley J."/>
            <person name="Holt K."/>
            <person name="Panagiotidis G."/>
            <person name="Lovell J."/>
            <person name="Beasley H."/>
            <person name="Henderson C."/>
            <person name="Gordon D."/>
            <person name="Auger K."/>
            <person name="Wright D."/>
            <person name="Collins J."/>
            <person name="Raisen C."/>
            <person name="Dyer L."/>
            <person name="Leung K."/>
            <person name="Robertson L."/>
            <person name="Ambridge K."/>
            <person name="Leongamornlert D."/>
            <person name="McGuire S."/>
            <person name="Gilderthorp R."/>
            <person name="Griffiths C."/>
            <person name="Manthravadi D."/>
            <person name="Nichol S."/>
            <person name="Barker G."/>
            <person name="Whitehead S."/>
            <person name="Kay M."/>
            <person name="Brown J."/>
            <person name="Murnane C."/>
            <person name="Gray E."/>
            <person name="Humphries M."/>
            <person name="Sycamore N."/>
            <person name="Barker D."/>
            <person name="Saunders D."/>
            <person name="Wallis J."/>
            <person name="Babbage A."/>
            <person name="Hammond S."/>
            <person name="Mashreghi-Mohammadi M."/>
            <person name="Barr L."/>
            <person name="Martin S."/>
            <person name="Wray P."/>
            <person name="Ellington A."/>
            <person name="Matthews N."/>
            <person name="Ellwood M."/>
            <person name="Woodmansey R."/>
            <person name="Clark G."/>
            <person name="Cooper J."/>
            <person name="Tromans A."/>
            <person name="Grafham D."/>
            <person name="Skuce C."/>
            <person name="Pandian R."/>
            <person name="Andrews R."/>
            <person name="Harrison E."/>
            <person name="Kimberley A."/>
            <person name="Garnett J."/>
            <person name="Fosker N."/>
            <person name="Hall R."/>
            <person name="Garner P."/>
            <person name="Kelly D."/>
            <person name="Bird C."/>
            <person name="Palmer S."/>
            <person name="Gehring I."/>
            <person name="Berger A."/>
            <person name="Dooley C.M."/>
            <person name="Ersan-Urun Z."/>
            <person name="Eser C."/>
            <person name="Geiger H."/>
            <person name="Geisler M."/>
            <person name="Karotki L."/>
            <person name="Kirn A."/>
            <person name="Konantz J."/>
            <person name="Konantz M."/>
            <person name="Oberlander M."/>
            <person name="Rudolph-Geiger S."/>
            <person name="Teucke M."/>
            <person name="Lanz C."/>
            <person name="Raddatz G."/>
            <person name="Osoegawa K."/>
            <person name="Zhu B."/>
            <person name="Rapp A."/>
            <person name="Widaa S."/>
            <person name="Langford C."/>
            <person name="Yang F."/>
            <person name="Schuster S.C."/>
            <person name="Carter N.P."/>
            <person name="Harrow J."/>
            <person name="Ning Z."/>
            <person name="Herrero J."/>
            <person name="Searle S.M."/>
            <person name="Enright A."/>
            <person name="Geisler R."/>
            <person name="Plasterk R.H."/>
            <person name="Lee C."/>
            <person name="Westerfield M."/>
            <person name="de Jong P.J."/>
            <person name="Zon L.I."/>
            <person name="Postlethwait J.H."/>
            <person name="Nusslein-Volhard C."/>
            <person name="Hubbard T.J."/>
            <person name="Roest Crollius H."/>
            <person name="Rogers J."/>
            <person name="Stemple D.L."/>
        </authorList>
    </citation>
    <scope>NUCLEOTIDE SEQUENCE [LARGE SCALE GENOMIC DNA]</scope>
    <source>
        <strain>Tuebingen</strain>
    </source>
</reference>
<name>ZD23A_DANRE</name>
<gene>
    <name type="primary">zdhhc23a</name>
</gene>
<keyword id="KW-0012">Acyltransferase</keyword>
<keyword id="KW-0333">Golgi apparatus</keyword>
<keyword id="KW-0449">Lipoprotein</keyword>
<keyword id="KW-0472">Membrane</keyword>
<keyword id="KW-0564">Palmitate</keyword>
<keyword id="KW-1185">Reference proteome</keyword>
<keyword id="KW-0808">Transferase</keyword>
<keyword id="KW-0812">Transmembrane</keyword>
<keyword id="KW-1133">Transmembrane helix</keyword>
<proteinExistence type="inferred from homology"/>
<organism>
    <name type="scientific">Danio rerio</name>
    <name type="common">Zebrafish</name>
    <name type="synonym">Brachydanio rerio</name>
    <dbReference type="NCBI Taxonomy" id="7955"/>
    <lineage>
        <taxon>Eukaryota</taxon>
        <taxon>Metazoa</taxon>
        <taxon>Chordata</taxon>
        <taxon>Craniata</taxon>
        <taxon>Vertebrata</taxon>
        <taxon>Euteleostomi</taxon>
        <taxon>Actinopterygii</taxon>
        <taxon>Neopterygii</taxon>
        <taxon>Teleostei</taxon>
        <taxon>Ostariophysi</taxon>
        <taxon>Cypriniformes</taxon>
        <taxon>Danionidae</taxon>
        <taxon>Danioninae</taxon>
        <taxon>Danio</taxon>
    </lineage>
</organism>
<protein>
    <recommendedName>
        <fullName evidence="5">Palmitoyltransferase ZDHHC23-A</fullName>
        <ecNumber evidence="2">2.3.1.225</ecNumber>
    </recommendedName>
    <alternativeName>
        <fullName>Zinc finger DHHC domain-containing protein 23-A</fullName>
    </alternativeName>
</protein>